<sequence>MADDSATPGVRVPSHRYGRHYHRRKIKEAVDSISSLPDVILQHILSFIPTKLAITTSLLSKRWRHVWCDTPSLSFNDYRLEAPFIDETLTRYTASKMMRFHLHTSLINNVPHLESWIKFAMSRNVDHLSLDLWNQVANKFKFPDFFHINSSLKQLTVVLDFSDTMIAICLKKLYLSTCLLSDESMANILFGCPILESLTLDHCGGLRVLDLSKSLRLRTLEINCNIWVPELTAMQIVAPHTHCLRLRNSKLPCSLVDVSSLKEAKLNICIDSFSKTIKADFLQVTLLKMLEKLHNVEKLTLGGNFLQILSVAELRGVPFPMFKVKDLTLETVIFQYVIPGIERVLQNSPDLKKLTLLTKDFYHKPGEYLGDHMDLEGFNLDQCWKSKYGVFWNKSCLDVESEHVVSFVELMLKNTKALDKMVVLLEDHYVRFKEMVPRLSHNYNISIALYTFKPQS</sequence>
<gene>
    <name type="ordered locus">At3g18150</name>
    <name type="ORF">MRC8.14</name>
</gene>
<proteinExistence type="predicted"/>
<organism>
    <name type="scientific">Arabidopsis thaliana</name>
    <name type="common">Mouse-ear cress</name>
    <dbReference type="NCBI Taxonomy" id="3702"/>
    <lineage>
        <taxon>Eukaryota</taxon>
        <taxon>Viridiplantae</taxon>
        <taxon>Streptophyta</taxon>
        <taxon>Embryophyta</taxon>
        <taxon>Tracheophyta</taxon>
        <taxon>Spermatophyta</taxon>
        <taxon>Magnoliopsida</taxon>
        <taxon>eudicotyledons</taxon>
        <taxon>Gunneridae</taxon>
        <taxon>Pentapetalae</taxon>
        <taxon>rosids</taxon>
        <taxon>malvids</taxon>
        <taxon>Brassicales</taxon>
        <taxon>Brassicaceae</taxon>
        <taxon>Camelineae</taxon>
        <taxon>Arabidopsis</taxon>
    </lineage>
</organism>
<accession>Q9LV26</accession>
<protein>
    <recommendedName>
        <fullName>Putative F-box/LRR-repeat protein At3g18150</fullName>
    </recommendedName>
</protein>
<evidence type="ECO:0000255" key="1">
    <source>
        <dbReference type="PROSITE-ProRule" id="PRU00080"/>
    </source>
</evidence>
<evidence type="ECO:0000305" key="2"/>
<dbReference type="EMBL" id="AB020749">
    <property type="protein sequence ID" value="BAB02027.1"/>
    <property type="status" value="ALT_SEQ"/>
    <property type="molecule type" value="Genomic_DNA"/>
</dbReference>
<dbReference type="EMBL" id="CP002686">
    <property type="protein sequence ID" value="AEE76054.1"/>
    <property type="molecule type" value="Genomic_DNA"/>
</dbReference>
<dbReference type="RefSeq" id="NP_188443.2">
    <property type="nucleotide sequence ID" value="NM_112697.3"/>
</dbReference>
<dbReference type="FunCoup" id="Q9LV26">
    <property type="interactions" value="383"/>
</dbReference>
<dbReference type="GlyGen" id="Q9LV26">
    <property type="glycosylation" value="1 site"/>
</dbReference>
<dbReference type="PaxDb" id="3702-AT3G18150.1"/>
<dbReference type="GeneID" id="821341"/>
<dbReference type="KEGG" id="ath:AT3G18150"/>
<dbReference type="Araport" id="AT3G18150"/>
<dbReference type="TAIR" id="AT3G18150"/>
<dbReference type="eggNOG" id="ENOG502QVFC">
    <property type="taxonomic scope" value="Eukaryota"/>
</dbReference>
<dbReference type="HOGENOM" id="CLU_600777_0_0_1"/>
<dbReference type="InParanoid" id="Q9LV26"/>
<dbReference type="PhylomeDB" id="Q9LV26"/>
<dbReference type="PRO" id="PR:Q9LV26"/>
<dbReference type="Proteomes" id="UP000006548">
    <property type="component" value="Chromosome 3"/>
</dbReference>
<dbReference type="ExpressionAtlas" id="Q9LV26">
    <property type="expression patterns" value="baseline"/>
</dbReference>
<dbReference type="CDD" id="cd22160">
    <property type="entry name" value="F-box_AtFBL13-like"/>
    <property type="match status" value="1"/>
</dbReference>
<dbReference type="Gene3D" id="1.20.1280.50">
    <property type="match status" value="1"/>
</dbReference>
<dbReference type="Gene3D" id="3.80.10.10">
    <property type="entry name" value="Ribonuclease Inhibitor"/>
    <property type="match status" value="1"/>
</dbReference>
<dbReference type="InterPro" id="IPR036047">
    <property type="entry name" value="F-box-like_dom_sf"/>
</dbReference>
<dbReference type="InterPro" id="IPR053781">
    <property type="entry name" value="F-box_AtFBL13-like"/>
</dbReference>
<dbReference type="InterPro" id="IPR001810">
    <property type="entry name" value="F-box_dom"/>
</dbReference>
<dbReference type="InterPro" id="IPR044997">
    <property type="entry name" value="F-box_plant"/>
</dbReference>
<dbReference type="InterPro" id="IPR055357">
    <property type="entry name" value="LRR_At1g61320_AtMIF1"/>
</dbReference>
<dbReference type="InterPro" id="IPR032675">
    <property type="entry name" value="LRR_dom_sf"/>
</dbReference>
<dbReference type="PANTHER" id="PTHR32153">
    <property type="entry name" value="OJ000223_09.16 PROTEIN"/>
    <property type="match status" value="1"/>
</dbReference>
<dbReference type="Pfam" id="PF00646">
    <property type="entry name" value="F-box"/>
    <property type="match status" value="1"/>
</dbReference>
<dbReference type="Pfam" id="PF23622">
    <property type="entry name" value="LRR_At1g61320_AtMIF1"/>
    <property type="match status" value="1"/>
</dbReference>
<dbReference type="SMART" id="SM00256">
    <property type="entry name" value="FBOX"/>
    <property type="match status" value="1"/>
</dbReference>
<dbReference type="SUPFAM" id="SSF81383">
    <property type="entry name" value="F-box domain"/>
    <property type="match status" value="1"/>
</dbReference>
<dbReference type="SUPFAM" id="SSF52047">
    <property type="entry name" value="RNI-like"/>
    <property type="match status" value="1"/>
</dbReference>
<dbReference type="PROSITE" id="PS50181">
    <property type="entry name" value="FBOX"/>
    <property type="match status" value="1"/>
</dbReference>
<feature type="chain" id="PRO_0000281946" description="Putative F-box/LRR-repeat protein At3g18150">
    <location>
        <begin position="1"/>
        <end position="456"/>
    </location>
</feature>
<feature type="domain" description="F-box" evidence="1">
    <location>
        <begin position="30"/>
        <end position="78"/>
    </location>
</feature>
<feature type="repeat" description="LRR 1">
    <location>
        <begin position="177"/>
        <end position="202"/>
    </location>
</feature>
<feature type="repeat" description="LRR 2">
    <location>
        <begin position="203"/>
        <end position="213"/>
    </location>
</feature>
<feature type="repeat" description="LRR 3">
    <location>
        <begin position="228"/>
        <end position="253"/>
    </location>
</feature>
<feature type="repeat" description="LRR 4">
    <location>
        <begin position="278"/>
        <end position="303"/>
    </location>
</feature>
<feature type="repeat" description="LRR 5">
    <location>
        <begin position="333"/>
        <end position="358"/>
    </location>
</feature>
<feature type="repeat" description="LRR 6">
    <location>
        <begin position="396"/>
        <end position="422"/>
    </location>
</feature>
<name>FBL45_ARATH</name>
<reference key="1">
    <citation type="journal article" date="2000" name="DNA Res.">
        <title>Structural analysis of Arabidopsis thaliana chromosome 3. II. Sequence features of the 4,251,695 bp regions covered by 90 P1, TAC and BAC clones.</title>
        <authorList>
            <person name="Kaneko T."/>
            <person name="Katoh T."/>
            <person name="Sato S."/>
            <person name="Nakamura Y."/>
            <person name="Asamizu E."/>
            <person name="Tabata S."/>
        </authorList>
    </citation>
    <scope>NUCLEOTIDE SEQUENCE [LARGE SCALE GENOMIC DNA]</scope>
    <source>
        <strain>cv. Columbia</strain>
    </source>
</reference>
<reference key="2">
    <citation type="journal article" date="2017" name="Plant J.">
        <title>Araport11: a complete reannotation of the Arabidopsis thaliana reference genome.</title>
        <authorList>
            <person name="Cheng C.Y."/>
            <person name="Krishnakumar V."/>
            <person name="Chan A.P."/>
            <person name="Thibaud-Nissen F."/>
            <person name="Schobel S."/>
            <person name="Town C.D."/>
        </authorList>
    </citation>
    <scope>GENOME REANNOTATION</scope>
    <source>
        <strain>cv. Columbia</strain>
    </source>
</reference>
<keyword id="KW-0433">Leucine-rich repeat</keyword>
<keyword id="KW-1185">Reference proteome</keyword>
<keyword id="KW-0677">Repeat</keyword>
<comment type="sequence caution" evidence="2">
    <conflict type="erroneous gene model prediction">
        <sequence resource="EMBL-CDS" id="BAB02027"/>
    </conflict>
</comment>